<dbReference type="EC" id="1.8.4.11"/>
<dbReference type="EC" id="1.8.4.12"/>
<dbReference type="EMBL" id="AE004092">
    <property type="protein sequence ID" value="AAK34345.1"/>
    <property type="status" value="ALT_INIT"/>
    <property type="molecule type" value="Genomic_DNA"/>
</dbReference>
<dbReference type="EMBL" id="CP000017">
    <property type="protein sequence ID" value="AAZ51900.1"/>
    <property type="status" value="ALT_INIT"/>
    <property type="molecule type" value="Genomic_DNA"/>
</dbReference>
<dbReference type="RefSeq" id="NP_269624.1">
    <property type="nucleotide sequence ID" value="NC_002737.2"/>
</dbReference>
<dbReference type="SMR" id="Q99YT1"/>
<dbReference type="PaxDb" id="1314-HKU360_01323"/>
<dbReference type="KEGG" id="spy:SPy_1557"/>
<dbReference type="KEGG" id="spz:M5005_Spy1282"/>
<dbReference type="PATRIC" id="fig|160490.10.peg.1360"/>
<dbReference type="HOGENOM" id="CLU_031040_1_1_9"/>
<dbReference type="OMA" id="GEFIPYI"/>
<dbReference type="Proteomes" id="UP000000750">
    <property type="component" value="Chromosome"/>
</dbReference>
<dbReference type="GO" id="GO:0005737">
    <property type="term" value="C:cytoplasm"/>
    <property type="evidence" value="ECO:0007669"/>
    <property type="project" value="TreeGrafter"/>
</dbReference>
<dbReference type="GO" id="GO:0033744">
    <property type="term" value="F:L-methionine:thioredoxin-disulfide S-oxidoreductase activity"/>
    <property type="evidence" value="ECO:0007669"/>
    <property type="project" value="RHEA"/>
</dbReference>
<dbReference type="GO" id="GO:0033743">
    <property type="term" value="F:peptide-methionine (R)-S-oxide reductase activity"/>
    <property type="evidence" value="ECO:0007669"/>
    <property type="project" value="UniProtKB-UniRule"/>
</dbReference>
<dbReference type="GO" id="GO:0008113">
    <property type="term" value="F:peptide-methionine (S)-S-oxide reductase activity"/>
    <property type="evidence" value="ECO:0007669"/>
    <property type="project" value="UniProtKB-UniRule"/>
</dbReference>
<dbReference type="GO" id="GO:0036211">
    <property type="term" value="P:protein modification process"/>
    <property type="evidence" value="ECO:0007669"/>
    <property type="project" value="UniProtKB-UniRule"/>
</dbReference>
<dbReference type="GO" id="GO:0030091">
    <property type="term" value="P:protein repair"/>
    <property type="evidence" value="ECO:0007669"/>
    <property type="project" value="InterPro"/>
</dbReference>
<dbReference type="GO" id="GO:0006979">
    <property type="term" value="P:response to oxidative stress"/>
    <property type="evidence" value="ECO:0007669"/>
    <property type="project" value="InterPro"/>
</dbReference>
<dbReference type="FunFam" id="3.30.1060.10:FF:000007">
    <property type="entry name" value="Peptide methionine sulfoxide reductase msrA/msrB"/>
    <property type="match status" value="1"/>
</dbReference>
<dbReference type="FunFam" id="2.170.150.20:FF:000003">
    <property type="entry name" value="Peptide methionine sulfoxide reductase MsrB"/>
    <property type="match status" value="1"/>
</dbReference>
<dbReference type="Gene3D" id="2.170.150.20">
    <property type="entry name" value="Peptide methionine sulfoxide reductase"/>
    <property type="match status" value="1"/>
</dbReference>
<dbReference type="Gene3D" id="3.30.1060.10">
    <property type="entry name" value="Peptide methionine sulphoxide reductase MsrA"/>
    <property type="match status" value="1"/>
</dbReference>
<dbReference type="HAMAP" id="MF_01401">
    <property type="entry name" value="MsrA"/>
    <property type="match status" value="1"/>
</dbReference>
<dbReference type="HAMAP" id="MF_01400">
    <property type="entry name" value="MsrB"/>
    <property type="match status" value="1"/>
</dbReference>
<dbReference type="InterPro" id="IPR002569">
    <property type="entry name" value="Met_Sox_Rdtase_MsrA_dom"/>
</dbReference>
<dbReference type="InterPro" id="IPR036509">
    <property type="entry name" value="Met_Sox_Rdtase_MsrA_sf"/>
</dbReference>
<dbReference type="InterPro" id="IPR028427">
    <property type="entry name" value="Met_Sox_Rdtase_MsrB"/>
</dbReference>
<dbReference type="InterPro" id="IPR002579">
    <property type="entry name" value="Met_Sox_Rdtase_MsrB_dom"/>
</dbReference>
<dbReference type="InterPro" id="IPR011057">
    <property type="entry name" value="Mss4-like_sf"/>
</dbReference>
<dbReference type="NCBIfam" id="TIGR00401">
    <property type="entry name" value="msrA"/>
    <property type="match status" value="1"/>
</dbReference>
<dbReference type="NCBIfam" id="TIGR00357">
    <property type="entry name" value="peptide-methionine (R)-S-oxide reductase MsrB"/>
    <property type="match status" value="1"/>
</dbReference>
<dbReference type="PANTHER" id="PTHR10173">
    <property type="entry name" value="METHIONINE SULFOXIDE REDUCTASE"/>
    <property type="match status" value="1"/>
</dbReference>
<dbReference type="PANTHER" id="PTHR10173:SF59">
    <property type="entry name" value="PEPTIDE METHIONINE SULFOXIDE REDUCTASE MSRA_MSRB"/>
    <property type="match status" value="1"/>
</dbReference>
<dbReference type="Pfam" id="PF01625">
    <property type="entry name" value="PMSR"/>
    <property type="match status" value="1"/>
</dbReference>
<dbReference type="Pfam" id="PF01641">
    <property type="entry name" value="SelR"/>
    <property type="match status" value="1"/>
</dbReference>
<dbReference type="SUPFAM" id="SSF51316">
    <property type="entry name" value="Mss4-like"/>
    <property type="match status" value="1"/>
</dbReference>
<dbReference type="SUPFAM" id="SSF55068">
    <property type="entry name" value="Peptide methionine sulfoxide reductase"/>
    <property type="match status" value="1"/>
</dbReference>
<dbReference type="PROSITE" id="PS51790">
    <property type="entry name" value="MSRB"/>
    <property type="match status" value="1"/>
</dbReference>
<sequence>MIYLAGGCFWGVEEYFSQVDGVLDAVSGYANGRGDTTNYQLIHQTGHAETVEVAYDANRISLKELLLHFFRIIDPTSLNKQGNDRGSQYRTGIYYTDKADLAIIDEVFKEKAKDYKKKIVVEKAPLKHFIKAEDYHQDYLKKNPNGYCHIDINQATYPVIDESKYPKPSATEIKEKLSADEYRVTQKNETEKAFSNRYWDSFDAGIYVDVVTGEPLFSSKDKFESGCGWPSFSRPISPDVVRYKEDKSFNMTRTEVRSRSGNSHLGHVFTDGPKDQGGLRYCINSLSITFIPKADMEAKGYGYLLSSVE</sequence>
<name>MSRAB_STRP1</name>
<proteinExistence type="inferred from homology"/>
<reference key="1">
    <citation type="journal article" date="2001" name="Proc. Natl. Acad. Sci. U.S.A.">
        <title>Complete genome sequence of an M1 strain of Streptococcus pyogenes.</title>
        <authorList>
            <person name="Ferretti J.J."/>
            <person name="McShan W.M."/>
            <person name="Ajdic D.J."/>
            <person name="Savic D.J."/>
            <person name="Savic G."/>
            <person name="Lyon K."/>
            <person name="Primeaux C."/>
            <person name="Sezate S."/>
            <person name="Suvorov A.N."/>
            <person name="Kenton S."/>
            <person name="Lai H.S."/>
            <person name="Lin S.P."/>
            <person name="Qian Y."/>
            <person name="Jia H.G."/>
            <person name="Najar F.Z."/>
            <person name="Ren Q."/>
            <person name="Zhu H."/>
            <person name="Song L."/>
            <person name="White J."/>
            <person name="Yuan X."/>
            <person name="Clifton S.W."/>
            <person name="Roe B.A."/>
            <person name="McLaughlin R.E."/>
        </authorList>
    </citation>
    <scope>NUCLEOTIDE SEQUENCE [LARGE SCALE GENOMIC DNA]</scope>
    <source>
        <strain>ATCC 700294 / SF370 / Serotype M1</strain>
    </source>
</reference>
<reference key="2">
    <citation type="journal article" date="2005" name="J. Infect. Dis.">
        <title>Evolutionary origin and emergence of a highly successful clone of serotype M1 group A Streptococcus involved multiple horizontal gene transfer events.</title>
        <authorList>
            <person name="Sumby P."/>
            <person name="Porcella S.F."/>
            <person name="Madrigal A.G."/>
            <person name="Barbian K.D."/>
            <person name="Virtaneva K."/>
            <person name="Ricklefs S.M."/>
            <person name="Sturdevant D.E."/>
            <person name="Graham M.R."/>
            <person name="Vuopio-Varkila J."/>
            <person name="Hoe N.P."/>
            <person name="Musser J.M."/>
        </authorList>
    </citation>
    <scope>NUCLEOTIDE SEQUENCE [LARGE SCALE GENOMIC DNA]</scope>
    <source>
        <strain>ATCC BAA-947 / MGAS5005 / Serotype M1</strain>
    </source>
</reference>
<organism>
    <name type="scientific">Streptococcus pyogenes serotype M1</name>
    <dbReference type="NCBI Taxonomy" id="301447"/>
    <lineage>
        <taxon>Bacteria</taxon>
        <taxon>Bacillati</taxon>
        <taxon>Bacillota</taxon>
        <taxon>Bacilli</taxon>
        <taxon>Lactobacillales</taxon>
        <taxon>Streptococcaceae</taxon>
        <taxon>Streptococcus</taxon>
    </lineage>
</organism>
<feature type="chain" id="PRO_0000138521" description="Peptide methionine sulfoxide reductase MsrA/MsrB">
    <location>
        <begin position="1"/>
        <end position="309"/>
    </location>
</feature>
<feature type="domain" description="MsrB" evidence="2">
    <location>
        <begin position="170"/>
        <end position="293"/>
    </location>
</feature>
<feature type="region of interest" description="Peptide methionine sulfoxide reductase A">
    <location>
        <begin position="1"/>
        <end position="153"/>
    </location>
</feature>
<feature type="active site" evidence="1">
    <location>
        <position position="8"/>
    </location>
</feature>
<feature type="active site" description="Nucleophile" evidence="2">
    <location>
        <position position="282"/>
    </location>
</feature>
<feature type="sequence conflict" description="In Ref. 2; AAZ51900." evidence="3" ref="2">
    <original>A</original>
    <variation>S</variation>
    <location>
        <position position="294"/>
    </location>
</feature>
<protein>
    <recommendedName>
        <fullName>Peptide methionine sulfoxide reductase MsrA/MsrB</fullName>
    </recommendedName>
    <domain>
        <recommendedName>
            <fullName>Peptide methionine sulfoxide reductase MsrA</fullName>
            <shortName>Protein-methionine-S-oxide reductase</shortName>
            <ecNumber>1.8.4.11</ecNumber>
        </recommendedName>
        <alternativeName>
            <fullName>Peptide-methionine (S)-S-oxide reductase</fullName>
            <shortName>Peptide Met(O) reductase</shortName>
        </alternativeName>
    </domain>
    <domain>
        <recommendedName>
            <fullName>Peptide methionine sulfoxide reductase MsrB</fullName>
            <ecNumber>1.8.4.12</ecNumber>
        </recommendedName>
        <alternativeName>
            <fullName>Peptide-methionine (R)-S-oxide reductase</fullName>
        </alternativeName>
    </domain>
</protein>
<keyword id="KW-0511">Multifunctional enzyme</keyword>
<keyword id="KW-0560">Oxidoreductase</keyword>
<keyword id="KW-1185">Reference proteome</keyword>
<accession>Q99YT1</accession>
<accession>Q48XM5</accession>
<gene>
    <name type="primary">msrAB</name>
    <name type="synonym">msrA</name>
    <name type="ordered locus">SPy_1557</name>
    <name type="ordered locus">M5005_Spy1282</name>
</gene>
<comment type="function">
    <text evidence="1">Has an important function as a repair enzyme for proteins that have been inactivated by oxidation. Catalyzes the reversible oxidation-reduction of methionine sulfoxide in proteins to methionine (By similarity).</text>
</comment>
<comment type="catalytic activity">
    <reaction>
        <text>L-methionyl-[protein] + [thioredoxin]-disulfide + H2O = L-methionyl-(S)-S-oxide-[protein] + [thioredoxin]-dithiol</text>
        <dbReference type="Rhea" id="RHEA:14217"/>
        <dbReference type="Rhea" id="RHEA-COMP:10698"/>
        <dbReference type="Rhea" id="RHEA-COMP:10700"/>
        <dbReference type="Rhea" id="RHEA-COMP:12313"/>
        <dbReference type="Rhea" id="RHEA-COMP:12315"/>
        <dbReference type="ChEBI" id="CHEBI:15377"/>
        <dbReference type="ChEBI" id="CHEBI:16044"/>
        <dbReference type="ChEBI" id="CHEBI:29950"/>
        <dbReference type="ChEBI" id="CHEBI:44120"/>
        <dbReference type="ChEBI" id="CHEBI:50058"/>
        <dbReference type="EC" id="1.8.4.11"/>
    </reaction>
</comment>
<comment type="catalytic activity">
    <reaction>
        <text>[thioredoxin]-disulfide + L-methionine + H2O = L-methionine (S)-S-oxide + [thioredoxin]-dithiol</text>
        <dbReference type="Rhea" id="RHEA:19993"/>
        <dbReference type="Rhea" id="RHEA-COMP:10698"/>
        <dbReference type="Rhea" id="RHEA-COMP:10700"/>
        <dbReference type="ChEBI" id="CHEBI:15377"/>
        <dbReference type="ChEBI" id="CHEBI:29950"/>
        <dbReference type="ChEBI" id="CHEBI:50058"/>
        <dbReference type="ChEBI" id="CHEBI:57844"/>
        <dbReference type="ChEBI" id="CHEBI:58772"/>
        <dbReference type="EC" id="1.8.4.11"/>
    </reaction>
</comment>
<comment type="catalytic activity">
    <reaction>
        <text>L-methionyl-[protein] + [thioredoxin]-disulfide + H2O = L-methionyl-(R)-S-oxide-[protein] + [thioredoxin]-dithiol</text>
        <dbReference type="Rhea" id="RHEA:24164"/>
        <dbReference type="Rhea" id="RHEA-COMP:10698"/>
        <dbReference type="Rhea" id="RHEA-COMP:10700"/>
        <dbReference type="Rhea" id="RHEA-COMP:12313"/>
        <dbReference type="Rhea" id="RHEA-COMP:12314"/>
        <dbReference type="ChEBI" id="CHEBI:15377"/>
        <dbReference type="ChEBI" id="CHEBI:16044"/>
        <dbReference type="ChEBI" id="CHEBI:29950"/>
        <dbReference type="ChEBI" id="CHEBI:45764"/>
        <dbReference type="ChEBI" id="CHEBI:50058"/>
        <dbReference type="EC" id="1.8.4.12"/>
    </reaction>
</comment>
<comment type="similarity">
    <text evidence="3">In the N-terminal section; belongs to the MsrA Met sulfoxide reductase family.</text>
</comment>
<comment type="similarity">
    <text evidence="3">In the C-terminal section; belongs to the MsrB Met sulfoxide reductase family.</text>
</comment>
<comment type="sequence caution" evidence="3">
    <conflict type="erroneous initiation">
        <sequence resource="EMBL-CDS" id="AAK34345"/>
    </conflict>
</comment>
<comment type="sequence caution" evidence="3">
    <conflict type="erroneous initiation">
        <sequence resource="EMBL-CDS" id="AAZ51900"/>
    </conflict>
</comment>
<evidence type="ECO:0000250" key="1"/>
<evidence type="ECO:0000255" key="2">
    <source>
        <dbReference type="PROSITE-ProRule" id="PRU01126"/>
    </source>
</evidence>
<evidence type="ECO:0000305" key="3"/>